<gene>
    <name evidence="1" type="primary">ruvB</name>
    <name type="ordered locus">Swit_2138</name>
</gene>
<name>RUVB_RHIWR</name>
<dbReference type="EC" id="3.6.4.-" evidence="1"/>
<dbReference type="EMBL" id="CP000699">
    <property type="protein sequence ID" value="ABQ68497.1"/>
    <property type="molecule type" value="Genomic_DNA"/>
</dbReference>
<dbReference type="SMR" id="A5V881"/>
<dbReference type="STRING" id="392499.Swit_2138"/>
<dbReference type="PaxDb" id="392499-Swit_2138"/>
<dbReference type="KEGG" id="swi:Swit_2138"/>
<dbReference type="eggNOG" id="COG2255">
    <property type="taxonomic scope" value="Bacteria"/>
</dbReference>
<dbReference type="HOGENOM" id="CLU_055599_1_0_5"/>
<dbReference type="OrthoDB" id="9804478at2"/>
<dbReference type="Proteomes" id="UP000001989">
    <property type="component" value="Chromosome"/>
</dbReference>
<dbReference type="GO" id="GO:0005737">
    <property type="term" value="C:cytoplasm"/>
    <property type="evidence" value="ECO:0007669"/>
    <property type="project" value="UniProtKB-SubCell"/>
</dbReference>
<dbReference type="GO" id="GO:0048476">
    <property type="term" value="C:Holliday junction resolvase complex"/>
    <property type="evidence" value="ECO:0007669"/>
    <property type="project" value="UniProtKB-UniRule"/>
</dbReference>
<dbReference type="GO" id="GO:0005524">
    <property type="term" value="F:ATP binding"/>
    <property type="evidence" value="ECO:0007669"/>
    <property type="project" value="UniProtKB-UniRule"/>
</dbReference>
<dbReference type="GO" id="GO:0016887">
    <property type="term" value="F:ATP hydrolysis activity"/>
    <property type="evidence" value="ECO:0007669"/>
    <property type="project" value="InterPro"/>
</dbReference>
<dbReference type="GO" id="GO:0000400">
    <property type="term" value="F:four-way junction DNA binding"/>
    <property type="evidence" value="ECO:0007669"/>
    <property type="project" value="UniProtKB-UniRule"/>
</dbReference>
<dbReference type="GO" id="GO:0009378">
    <property type="term" value="F:four-way junction helicase activity"/>
    <property type="evidence" value="ECO:0007669"/>
    <property type="project" value="InterPro"/>
</dbReference>
<dbReference type="GO" id="GO:0006310">
    <property type="term" value="P:DNA recombination"/>
    <property type="evidence" value="ECO:0007669"/>
    <property type="project" value="UniProtKB-UniRule"/>
</dbReference>
<dbReference type="GO" id="GO:0006281">
    <property type="term" value="P:DNA repair"/>
    <property type="evidence" value="ECO:0007669"/>
    <property type="project" value="UniProtKB-UniRule"/>
</dbReference>
<dbReference type="CDD" id="cd00009">
    <property type="entry name" value="AAA"/>
    <property type="match status" value="1"/>
</dbReference>
<dbReference type="Gene3D" id="1.10.8.60">
    <property type="match status" value="1"/>
</dbReference>
<dbReference type="Gene3D" id="3.40.50.300">
    <property type="entry name" value="P-loop containing nucleotide triphosphate hydrolases"/>
    <property type="match status" value="1"/>
</dbReference>
<dbReference type="Gene3D" id="1.10.10.10">
    <property type="entry name" value="Winged helix-like DNA-binding domain superfamily/Winged helix DNA-binding domain"/>
    <property type="match status" value="1"/>
</dbReference>
<dbReference type="HAMAP" id="MF_00016">
    <property type="entry name" value="DNA_HJ_migration_RuvB"/>
    <property type="match status" value="1"/>
</dbReference>
<dbReference type="InterPro" id="IPR003593">
    <property type="entry name" value="AAA+_ATPase"/>
</dbReference>
<dbReference type="InterPro" id="IPR041445">
    <property type="entry name" value="AAA_lid_4"/>
</dbReference>
<dbReference type="InterPro" id="IPR004605">
    <property type="entry name" value="DNA_helicase_Holl-junc_RuvB"/>
</dbReference>
<dbReference type="InterPro" id="IPR027417">
    <property type="entry name" value="P-loop_NTPase"/>
</dbReference>
<dbReference type="InterPro" id="IPR008824">
    <property type="entry name" value="RuvB-like_N"/>
</dbReference>
<dbReference type="InterPro" id="IPR008823">
    <property type="entry name" value="RuvB_C"/>
</dbReference>
<dbReference type="InterPro" id="IPR036388">
    <property type="entry name" value="WH-like_DNA-bd_sf"/>
</dbReference>
<dbReference type="InterPro" id="IPR036390">
    <property type="entry name" value="WH_DNA-bd_sf"/>
</dbReference>
<dbReference type="NCBIfam" id="NF000868">
    <property type="entry name" value="PRK00080.1"/>
    <property type="match status" value="1"/>
</dbReference>
<dbReference type="NCBIfam" id="TIGR00635">
    <property type="entry name" value="ruvB"/>
    <property type="match status" value="1"/>
</dbReference>
<dbReference type="PANTHER" id="PTHR42848">
    <property type="match status" value="1"/>
</dbReference>
<dbReference type="PANTHER" id="PTHR42848:SF1">
    <property type="entry name" value="HOLLIDAY JUNCTION BRANCH MIGRATION COMPLEX SUBUNIT RUVB"/>
    <property type="match status" value="1"/>
</dbReference>
<dbReference type="Pfam" id="PF17864">
    <property type="entry name" value="AAA_lid_4"/>
    <property type="match status" value="1"/>
</dbReference>
<dbReference type="Pfam" id="PF05491">
    <property type="entry name" value="RuvB_C"/>
    <property type="match status" value="1"/>
</dbReference>
<dbReference type="Pfam" id="PF05496">
    <property type="entry name" value="RuvB_N"/>
    <property type="match status" value="1"/>
</dbReference>
<dbReference type="SMART" id="SM00382">
    <property type="entry name" value="AAA"/>
    <property type="match status" value="1"/>
</dbReference>
<dbReference type="SUPFAM" id="SSF52540">
    <property type="entry name" value="P-loop containing nucleoside triphosphate hydrolases"/>
    <property type="match status" value="1"/>
</dbReference>
<dbReference type="SUPFAM" id="SSF46785">
    <property type="entry name" value="Winged helix' DNA-binding domain"/>
    <property type="match status" value="1"/>
</dbReference>
<reference key="1">
    <citation type="journal article" date="2010" name="J. Bacteriol.">
        <title>Genome sequence of the dioxin-mineralizing bacterium Sphingomonas wittichii RW1.</title>
        <authorList>
            <person name="Miller T.R."/>
            <person name="Delcher A.L."/>
            <person name="Salzberg S.L."/>
            <person name="Saunders E."/>
            <person name="Detter J.C."/>
            <person name="Halden R.U."/>
        </authorList>
    </citation>
    <scope>NUCLEOTIDE SEQUENCE [LARGE SCALE GENOMIC DNA]</scope>
    <source>
        <strain>DSM 6014 / CCUG 31198 / JCM 15750 / NBRC 105917 / EY 4224 / RW1</strain>
    </source>
</reference>
<evidence type="ECO:0000255" key="1">
    <source>
        <dbReference type="HAMAP-Rule" id="MF_00016"/>
    </source>
</evidence>
<proteinExistence type="inferred from homology"/>
<sequence length="342" mass="37507">MTDTDRLLSAGRRAEDVDAALRPRSLDEFVGQQAARDNLRVFIEAARQRGDALDHVLFFGPPGLGKTTLAQIIAKEMGAGFRATSGPVIAKSGDLAALLTNLEDGDVLFIDEIHRLQPQVEEVLYPAMEDRALDLMIGEGPSARSVRIDLPRFTLVGATTRQGLITTPLRDRFGIPIRLQFYTVEELERVVSRAARLLDLPIASDGAMEIARRARGTPRIAGRLLRRVRDFAHVLGADIVDAKVADQSLNRLEVDNLGLDAMDRRYLHMIADIYRGGPVGVETLAAGLSEPRDTIEDVIEPYLIQLGLIARTARGRCLNGRGWKHLGLNPPPEAGQDGLFDV</sequence>
<feature type="chain" id="PRO_0000322840" description="Holliday junction branch migration complex subunit RuvB">
    <location>
        <begin position="1"/>
        <end position="342"/>
    </location>
</feature>
<feature type="region of interest" description="Large ATPase domain (RuvB-L)" evidence="1">
    <location>
        <begin position="4"/>
        <end position="182"/>
    </location>
</feature>
<feature type="region of interest" description="Small ATPAse domain (RuvB-S)" evidence="1">
    <location>
        <begin position="183"/>
        <end position="253"/>
    </location>
</feature>
<feature type="region of interest" description="Head domain (RuvB-H)" evidence="1">
    <location>
        <begin position="256"/>
        <end position="342"/>
    </location>
</feature>
<feature type="binding site" evidence="1">
    <location>
        <position position="21"/>
    </location>
    <ligand>
        <name>ATP</name>
        <dbReference type="ChEBI" id="CHEBI:30616"/>
    </ligand>
</feature>
<feature type="binding site" evidence="1">
    <location>
        <position position="22"/>
    </location>
    <ligand>
        <name>ATP</name>
        <dbReference type="ChEBI" id="CHEBI:30616"/>
    </ligand>
</feature>
<feature type="binding site" evidence="1">
    <location>
        <position position="63"/>
    </location>
    <ligand>
        <name>ATP</name>
        <dbReference type="ChEBI" id="CHEBI:30616"/>
    </ligand>
</feature>
<feature type="binding site" evidence="1">
    <location>
        <position position="66"/>
    </location>
    <ligand>
        <name>ATP</name>
        <dbReference type="ChEBI" id="CHEBI:30616"/>
    </ligand>
</feature>
<feature type="binding site" evidence="1">
    <location>
        <position position="67"/>
    </location>
    <ligand>
        <name>ATP</name>
        <dbReference type="ChEBI" id="CHEBI:30616"/>
    </ligand>
</feature>
<feature type="binding site" evidence="1">
    <location>
        <position position="67"/>
    </location>
    <ligand>
        <name>Mg(2+)</name>
        <dbReference type="ChEBI" id="CHEBI:18420"/>
    </ligand>
</feature>
<feature type="binding site" evidence="1">
    <location>
        <position position="68"/>
    </location>
    <ligand>
        <name>ATP</name>
        <dbReference type="ChEBI" id="CHEBI:30616"/>
    </ligand>
</feature>
<feature type="binding site" evidence="1">
    <location>
        <position position="172"/>
    </location>
    <ligand>
        <name>ATP</name>
        <dbReference type="ChEBI" id="CHEBI:30616"/>
    </ligand>
</feature>
<feature type="binding site" evidence="1">
    <location>
        <position position="182"/>
    </location>
    <ligand>
        <name>ATP</name>
        <dbReference type="ChEBI" id="CHEBI:30616"/>
    </ligand>
</feature>
<feature type="binding site" evidence="1">
    <location>
        <position position="219"/>
    </location>
    <ligand>
        <name>ATP</name>
        <dbReference type="ChEBI" id="CHEBI:30616"/>
    </ligand>
</feature>
<feature type="binding site" evidence="1">
    <location>
        <position position="292"/>
    </location>
    <ligand>
        <name>DNA</name>
        <dbReference type="ChEBI" id="CHEBI:16991"/>
    </ligand>
</feature>
<feature type="binding site" evidence="1">
    <location>
        <position position="311"/>
    </location>
    <ligand>
        <name>DNA</name>
        <dbReference type="ChEBI" id="CHEBI:16991"/>
    </ligand>
</feature>
<feature type="binding site" evidence="1">
    <location>
        <position position="316"/>
    </location>
    <ligand>
        <name>DNA</name>
        <dbReference type="ChEBI" id="CHEBI:16991"/>
    </ligand>
</feature>
<protein>
    <recommendedName>
        <fullName evidence="1">Holliday junction branch migration complex subunit RuvB</fullName>
        <ecNumber evidence="1">3.6.4.-</ecNumber>
    </recommendedName>
</protein>
<keyword id="KW-0067">ATP-binding</keyword>
<keyword id="KW-0963">Cytoplasm</keyword>
<keyword id="KW-0227">DNA damage</keyword>
<keyword id="KW-0233">DNA recombination</keyword>
<keyword id="KW-0234">DNA repair</keyword>
<keyword id="KW-0238">DNA-binding</keyword>
<keyword id="KW-0378">Hydrolase</keyword>
<keyword id="KW-0547">Nucleotide-binding</keyword>
<keyword id="KW-1185">Reference proteome</keyword>
<comment type="function">
    <text evidence="1">The RuvA-RuvB-RuvC complex processes Holliday junction (HJ) DNA during genetic recombination and DNA repair, while the RuvA-RuvB complex plays an important role in the rescue of blocked DNA replication forks via replication fork reversal (RFR). RuvA specifically binds to HJ cruciform DNA, conferring on it an open structure. The RuvB hexamer acts as an ATP-dependent pump, pulling dsDNA into and through the RuvAB complex. RuvB forms 2 homohexamers on either side of HJ DNA bound by 1 or 2 RuvA tetramers; 4 subunits per hexamer contact DNA at a time. Coordinated motions by a converter formed by DNA-disengaged RuvB subunits stimulates ATP hydrolysis and nucleotide exchange. Immobilization of the converter enables RuvB to convert the ATP-contained energy into a lever motion, pulling 2 nucleotides of DNA out of the RuvA tetramer per ATP hydrolyzed, thus driving DNA branch migration. The RuvB motors rotate together with the DNA substrate, which together with the progressing nucleotide cycle form the mechanistic basis for DNA recombination by continuous HJ branch migration. Branch migration allows RuvC to scan DNA until it finds its consensus sequence, where it cleaves and resolves cruciform DNA.</text>
</comment>
<comment type="catalytic activity">
    <reaction evidence="1">
        <text>ATP + H2O = ADP + phosphate + H(+)</text>
        <dbReference type="Rhea" id="RHEA:13065"/>
        <dbReference type="ChEBI" id="CHEBI:15377"/>
        <dbReference type="ChEBI" id="CHEBI:15378"/>
        <dbReference type="ChEBI" id="CHEBI:30616"/>
        <dbReference type="ChEBI" id="CHEBI:43474"/>
        <dbReference type="ChEBI" id="CHEBI:456216"/>
    </reaction>
</comment>
<comment type="subunit">
    <text evidence="1">Homohexamer. Forms an RuvA(8)-RuvB(12)-Holliday junction (HJ) complex. HJ DNA is sandwiched between 2 RuvA tetramers; dsDNA enters through RuvA and exits via RuvB. An RuvB hexamer assembles on each DNA strand where it exits the tetramer. Each RuvB hexamer is contacted by two RuvA subunits (via domain III) on 2 adjacent RuvB subunits; this complex drives branch migration. In the full resolvosome a probable DNA-RuvA(4)-RuvB(12)-RuvC(2) complex forms which resolves the HJ.</text>
</comment>
<comment type="subcellular location">
    <subcellularLocation>
        <location evidence="1">Cytoplasm</location>
    </subcellularLocation>
</comment>
<comment type="domain">
    <text evidence="1">Has 3 domains, the large (RuvB-L) and small ATPase (RuvB-S) domains and the C-terminal head (RuvB-H) domain. The head domain binds DNA, while the ATPase domains jointly bind ATP, ADP or are empty depending on the state of the subunit in the translocation cycle. During a single DNA translocation step the structure of each domain remains the same, but their relative positions change.</text>
</comment>
<comment type="similarity">
    <text evidence="1">Belongs to the RuvB family.</text>
</comment>
<accession>A5V881</accession>
<organism>
    <name type="scientific">Rhizorhabdus wittichii (strain DSM 6014 / CCUG 31198 / JCM 15750 / NBRC 105917 / EY 4224 / RW1)</name>
    <name type="common">Sphingomonas wittichii</name>
    <dbReference type="NCBI Taxonomy" id="392499"/>
    <lineage>
        <taxon>Bacteria</taxon>
        <taxon>Pseudomonadati</taxon>
        <taxon>Pseudomonadota</taxon>
        <taxon>Alphaproteobacteria</taxon>
        <taxon>Sphingomonadales</taxon>
        <taxon>Sphingomonadaceae</taxon>
        <taxon>Rhizorhabdus</taxon>
    </lineage>
</organism>